<reference key="1">
    <citation type="journal article" date="2007" name="PLoS Genet.">
        <title>Patterns and implications of gene gain and loss in the evolution of Prochlorococcus.</title>
        <authorList>
            <person name="Kettler G.C."/>
            <person name="Martiny A.C."/>
            <person name="Huang K."/>
            <person name="Zucker J."/>
            <person name="Coleman M.L."/>
            <person name="Rodrigue S."/>
            <person name="Chen F."/>
            <person name="Lapidus A."/>
            <person name="Ferriera S."/>
            <person name="Johnson J."/>
            <person name="Steglich C."/>
            <person name="Church G.M."/>
            <person name="Richardson P."/>
            <person name="Chisholm S.W."/>
        </authorList>
    </citation>
    <scope>NUCLEOTIDE SEQUENCE [LARGE SCALE GENOMIC DNA]</scope>
    <source>
        <strain>MIT 9303</strain>
    </source>
</reference>
<dbReference type="EC" id="2.4.2.10" evidence="1"/>
<dbReference type="EMBL" id="CP000554">
    <property type="protein sequence ID" value="ABM79227.1"/>
    <property type="molecule type" value="Genomic_DNA"/>
</dbReference>
<dbReference type="RefSeq" id="WP_011827075.1">
    <property type="nucleotide sequence ID" value="NC_008820.1"/>
</dbReference>
<dbReference type="SMR" id="A2CCL7"/>
<dbReference type="STRING" id="59922.P9303_24961"/>
<dbReference type="KEGG" id="pmf:P9303_24961"/>
<dbReference type="HOGENOM" id="CLU_074878_2_1_3"/>
<dbReference type="BioCyc" id="PMAR59922:G1G80-2186-MONOMER"/>
<dbReference type="UniPathway" id="UPA00070">
    <property type="reaction ID" value="UER00119"/>
</dbReference>
<dbReference type="Proteomes" id="UP000002274">
    <property type="component" value="Chromosome"/>
</dbReference>
<dbReference type="GO" id="GO:0000287">
    <property type="term" value="F:magnesium ion binding"/>
    <property type="evidence" value="ECO:0007669"/>
    <property type="project" value="UniProtKB-UniRule"/>
</dbReference>
<dbReference type="GO" id="GO:0004588">
    <property type="term" value="F:orotate phosphoribosyltransferase activity"/>
    <property type="evidence" value="ECO:0007669"/>
    <property type="project" value="UniProtKB-UniRule"/>
</dbReference>
<dbReference type="GO" id="GO:0044205">
    <property type="term" value="P:'de novo' UMP biosynthetic process"/>
    <property type="evidence" value="ECO:0007669"/>
    <property type="project" value="UniProtKB-UniRule"/>
</dbReference>
<dbReference type="GO" id="GO:0019856">
    <property type="term" value="P:pyrimidine nucleobase biosynthetic process"/>
    <property type="evidence" value="ECO:0007669"/>
    <property type="project" value="TreeGrafter"/>
</dbReference>
<dbReference type="CDD" id="cd06223">
    <property type="entry name" value="PRTases_typeI"/>
    <property type="match status" value="1"/>
</dbReference>
<dbReference type="FunFam" id="3.40.50.2020:FF:000029">
    <property type="entry name" value="Orotate phosphoribosyltransferase"/>
    <property type="match status" value="1"/>
</dbReference>
<dbReference type="Gene3D" id="3.40.50.2020">
    <property type="match status" value="1"/>
</dbReference>
<dbReference type="HAMAP" id="MF_01208">
    <property type="entry name" value="PyrE"/>
    <property type="match status" value="1"/>
</dbReference>
<dbReference type="InterPro" id="IPR023031">
    <property type="entry name" value="OPRT"/>
</dbReference>
<dbReference type="InterPro" id="IPR004467">
    <property type="entry name" value="Or_phspho_trans_dom"/>
</dbReference>
<dbReference type="InterPro" id="IPR000836">
    <property type="entry name" value="PRibTrfase_dom"/>
</dbReference>
<dbReference type="InterPro" id="IPR029057">
    <property type="entry name" value="PRTase-like"/>
</dbReference>
<dbReference type="NCBIfam" id="TIGR00336">
    <property type="entry name" value="pyrE"/>
    <property type="match status" value="1"/>
</dbReference>
<dbReference type="PANTHER" id="PTHR19278">
    <property type="entry name" value="OROTATE PHOSPHORIBOSYLTRANSFERASE"/>
    <property type="match status" value="1"/>
</dbReference>
<dbReference type="PANTHER" id="PTHR19278:SF9">
    <property type="entry name" value="URIDINE 5'-MONOPHOSPHATE SYNTHASE"/>
    <property type="match status" value="1"/>
</dbReference>
<dbReference type="SUPFAM" id="SSF53271">
    <property type="entry name" value="PRTase-like"/>
    <property type="match status" value="1"/>
</dbReference>
<keyword id="KW-0328">Glycosyltransferase</keyword>
<keyword id="KW-0460">Magnesium</keyword>
<keyword id="KW-0665">Pyrimidine biosynthesis</keyword>
<keyword id="KW-0808">Transferase</keyword>
<evidence type="ECO:0000255" key="1">
    <source>
        <dbReference type="HAMAP-Rule" id="MF_01208"/>
    </source>
</evidence>
<comment type="function">
    <text evidence="1">Catalyzes the transfer of a ribosyl phosphate group from 5-phosphoribose 1-diphosphate to orotate, leading to the formation of orotidine monophosphate (OMP).</text>
</comment>
<comment type="catalytic activity">
    <reaction evidence="1">
        <text>orotidine 5'-phosphate + diphosphate = orotate + 5-phospho-alpha-D-ribose 1-diphosphate</text>
        <dbReference type="Rhea" id="RHEA:10380"/>
        <dbReference type="ChEBI" id="CHEBI:30839"/>
        <dbReference type="ChEBI" id="CHEBI:33019"/>
        <dbReference type="ChEBI" id="CHEBI:57538"/>
        <dbReference type="ChEBI" id="CHEBI:58017"/>
        <dbReference type="EC" id="2.4.2.10"/>
    </reaction>
</comment>
<comment type="cofactor">
    <cofactor evidence="1">
        <name>Mg(2+)</name>
        <dbReference type="ChEBI" id="CHEBI:18420"/>
    </cofactor>
</comment>
<comment type="pathway">
    <text evidence="1">Pyrimidine metabolism; UMP biosynthesis via de novo pathway; UMP from orotate: step 1/2.</text>
</comment>
<comment type="subunit">
    <text evidence="1">Homodimer.</text>
</comment>
<comment type="similarity">
    <text evidence="1">Belongs to the purine/pyrimidine phosphoribosyltransferase family. PyrE subfamily.</text>
</comment>
<organism>
    <name type="scientific">Prochlorococcus marinus (strain MIT 9303)</name>
    <dbReference type="NCBI Taxonomy" id="59922"/>
    <lineage>
        <taxon>Bacteria</taxon>
        <taxon>Bacillati</taxon>
        <taxon>Cyanobacteriota</taxon>
        <taxon>Cyanophyceae</taxon>
        <taxon>Synechococcales</taxon>
        <taxon>Prochlorococcaceae</taxon>
        <taxon>Prochlorococcus</taxon>
    </lineage>
</organism>
<sequence>MSPLPPSAEACRDELLNRLAREAYRHGDFTLASGRQSNHYVNCKPVSLSGSGLELLGLALLKYVEPDAVCVAGLTLGADPLVSAVAMAAAQAERTLNALIVRKQAKGHGTAAWLEGPLPPSGARITVLEDVVTTGGSSLKAVQQLRETGYLVTRVVTIVDRQEGGEEALNAAELELVSLYQLNQVAERARQLETET</sequence>
<feature type="chain" id="PRO_1000066268" description="Orotate phosphoribosyltransferase">
    <location>
        <begin position="1"/>
        <end position="196"/>
    </location>
</feature>
<feature type="binding site" evidence="1">
    <location>
        <position position="102"/>
    </location>
    <ligand>
        <name>5-phospho-alpha-D-ribose 1-diphosphate</name>
        <dbReference type="ChEBI" id="CHEBI:58017"/>
        <note>ligand shared between dimeric partners</note>
    </ligand>
</feature>
<feature type="binding site" description="in other chain" evidence="1">
    <location>
        <position position="103"/>
    </location>
    <ligand>
        <name>5-phospho-alpha-D-ribose 1-diphosphate</name>
        <dbReference type="ChEBI" id="CHEBI:58017"/>
        <note>ligand shared between dimeric partners</note>
    </ligand>
</feature>
<feature type="binding site" evidence="1">
    <location>
        <position position="106"/>
    </location>
    <ligand>
        <name>5-phospho-alpha-D-ribose 1-diphosphate</name>
        <dbReference type="ChEBI" id="CHEBI:58017"/>
        <note>ligand shared between dimeric partners</note>
    </ligand>
</feature>
<feature type="binding site" evidence="1">
    <location>
        <position position="108"/>
    </location>
    <ligand>
        <name>5-phospho-alpha-D-ribose 1-diphosphate</name>
        <dbReference type="ChEBI" id="CHEBI:58017"/>
        <note>ligand shared between dimeric partners</note>
    </ligand>
</feature>
<feature type="binding site" description="in other chain" evidence="1">
    <location>
        <begin position="129"/>
        <end position="137"/>
    </location>
    <ligand>
        <name>5-phospho-alpha-D-ribose 1-diphosphate</name>
        <dbReference type="ChEBI" id="CHEBI:58017"/>
        <note>ligand shared between dimeric partners</note>
    </ligand>
</feature>
<feature type="binding site" evidence="1">
    <location>
        <position position="133"/>
    </location>
    <ligand>
        <name>orotate</name>
        <dbReference type="ChEBI" id="CHEBI:30839"/>
    </ligand>
</feature>
<feature type="binding site" evidence="1">
    <location>
        <position position="161"/>
    </location>
    <ligand>
        <name>orotate</name>
        <dbReference type="ChEBI" id="CHEBI:30839"/>
    </ligand>
</feature>
<protein>
    <recommendedName>
        <fullName evidence="1">Orotate phosphoribosyltransferase</fullName>
        <shortName evidence="1">OPRT</shortName>
        <shortName evidence="1">OPRTase</shortName>
        <ecNumber evidence="1">2.4.2.10</ecNumber>
    </recommendedName>
</protein>
<name>PYRE_PROM3</name>
<proteinExistence type="inferred from homology"/>
<accession>A2CCL7</accession>
<gene>
    <name evidence="1" type="primary">pyrE</name>
    <name type="ordered locus">P9303_24961</name>
</gene>